<proteinExistence type="inferred from homology"/>
<comment type="function">
    <text evidence="1">ATP-dependent agmatine transferase that catalyzes the formation of 2-agmatinylcytidine (agm2C) at the wobble position (C34) of tRNA(Ile2), converting the codon specificity from AUG to AUA.</text>
</comment>
<comment type="catalytic activity">
    <reaction evidence="1">
        <text>cytidine(34) in tRNA(Ile2) + agmatine + ATP + H2O = 2-agmatinylcytidine(34) in tRNA(Ile2) + AMP + 2 phosphate + 2 H(+)</text>
        <dbReference type="Rhea" id="RHEA:43608"/>
        <dbReference type="Rhea" id="RHEA-COMP:10625"/>
        <dbReference type="Rhea" id="RHEA-COMP:10626"/>
        <dbReference type="ChEBI" id="CHEBI:15377"/>
        <dbReference type="ChEBI" id="CHEBI:15378"/>
        <dbReference type="ChEBI" id="CHEBI:30616"/>
        <dbReference type="ChEBI" id="CHEBI:43474"/>
        <dbReference type="ChEBI" id="CHEBI:58145"/>
        <dbReference type="ChEBI" id="CHEBI:82748"/>
        <dbReference type="ChEBI" id="CHEBI:83545"/>
        <dbReference type="ChEBI" id="CHEBI:456215"/>
        <dbReference type="EC" id="6.3.4.22"/>
    </reaction>
</comment>
<comment type="subcellular location">
    <subcellularLocation>
        <location evidence="1">Cytoplasm</location>
    </subcellularLocation>
</comment>
<comment type="similarity">
    <text evidence="1">Belongs to the TiaS family.</text>
</comment>
<feature type="chain" id="PRO_0000407291" description="tRNA(Ile2) 2-agmatinylcytidine synthetase TiaS">
    <location>
        <begin position="1"/>
        <end position="462"/>
    </location>
</feature>
<name>TIAS_HALWD</name>
<dbReference type="EC" id="6.3.4.22" evidence="1"/>
<dbReference type="EMBL" id="AM180088">
    <property type="protein sequence ID" value="CAJ53158.1"/>
    <property type="molecule type" value="Genomic_DNA"/>
</dbReference>
<dbReference type="RefSeq" id="WP_011572265.1">
    <property type="nucleotide sequence ID" value="NC_008212.1"/>
</dbReference>
<dbReference type="SMR" id="Q18FU7"/>
<dbReference type="STRING" id="362976.HQ_3056A"/>
<dbReference type="GeneID" id="4193262"/>
<dbReference type="KEGG" id="hwa:HQ_3056A"/>
<dbReference type="eggNOG" id="arCOG01115">
    <property type="taxonomic scope" value="Archaea"/>
</dbReference>
<dbReference type="HOGENOM" id="CLU_675459_0_0_2"/>
<dbReference type="Proteomes" id="UP000001975">
    <property type="component" value="Chromosome"/>
</dbReference>
<dbReference type="GO" id="GO:0005737">
    <property type="term" value="C:cytoplasm"/>
    <property type="evidence" value="ECO:0007669"/>
    <property type="project" value="UniProtKB-SubCell"/>
</dbReference>
<dbReference type="GO" id="GO:0005524">
    <property type="term" value="F:ATP binding"/>
    <property type="evidence" value="ECO:0007669"/>
    <property type="project" value="UniProtKB-KW"/>
</dbReference>
<dbReference type="GO" id="GO:0016879">
    <property type="term" value="F:ligase activity, forming carbon-nitrogen bonds"/>
    <property type="evidence" value="ECO:0007669"/>
    <property type="project" value="UniProtKB-UniRule"/>
</dbReference>
<dbReference type="GO" id="GO:0002101">
    <property type="term" value="P:tRNA wobble cytosine modification"/>
    <property type="evidence" value="ECO:0007669"/>
    <property type="project" value="UniProtKB-UniRule"/>
</dbReference>
<dbReference type="CDD" id="cd04482">
    <property type="entry name" value="RPA2_OBF_like"/>
    <property type="match status" value="1"/>
</dbReference>
<dbReference type="Gene3D" id="2.40.50.1010">
    <property type="match status" value="1"/>
</dbReference>
<dbReference type="Gene3D" id="3.30.70.2200">
    <property type="match status" value="1"/>
</dbReference>
<dbReference type="Gene3D" id="3.90.600.20">
    <property type="match status" value="1"/>
</dbReference>
<dbReference type="HAMAP" id="MF_01892">
    <property type="entry name" value="tRNA_Ile2_agm2C_synt"/>
    <property type="match status" value="1"/>
</dbReference>
<dbReference type="InterPro" id="IPR053870">
    <property type="entry name" value="TiaS-like_TCKD"/>
</dbReference>
<dbReference type="InterPro" id="IPR013696">
    <property type="entry name" value="TiaS_FLD"/>
</dbReference>
<dbReference type="InterPro" id="IPR024913">
    <property type="entry name" value="tRNA_Ile2__agm2C_synt"/>
</dbReference>
<dbReference type="InterPro" id="IPR055394">
    <property type="entry name" value="Zn_ribbon_TiaS"/>
</dbReference>
<dbReference type="PANTHER" id="PTHR40705">
    <property type="entry name" value="TRNA(ILE2) 2-AGMATINYLCYTIDINE SYNTHETASE TIAS"/>
    <property type="match status" value="1"/>
</dbReference>
<dbReference type="PANTHER" id="PTHR40705:SF1">
    <property type="entry name" value="TRNA(ILE2) 2-AGMATINYLCYTIDINE SYNTHETASE TIAS"/>
    <property type="match status" value="1"/>
</dbReference>
<dbReference type="Pfam" id="PF08489">
    <property type="entry name" value="TiaS_FLD"/>
    <property type="match status" value="1"/>
</dbReference>
<dbReference type="Pfam" id="PF22641">
    <property type="entry name" value="TiaS_TCKD"/>
    <property type="match status" value="1"/>
</dbReference>
<dbReference type="Pfam" id="PF23783">
    <property type="entry name" value="Zn_ribbon_TiaS"/>
    <property type="match status" value="1"/>
</dbReference>
<sequence length="462" mass="50914">MTVIGIDDTDSRNRGMCTTYLATRIATAIEHAGGTVERRLLIRLNPAVEHKTRGNAAIALHTDIDPTDAVEISTQFIDSLAISDDPNTSPGVVITDTCTPHSVADSVIDFCWDAIREFHTIADTVDLIEQVGYHHQGWDGGRGRIGALAAVGAWAALTEWTIEHIAYRQFNRCGTDRDVDEKSVFEAAKRQYPAVWDTVDREEDDAVCVPNAPGPILYGIRGDDVAAVKTVAAEIDSEPVERSSTFITNQGTDIHLRPGTIGSLRDNRAYRVTGTVITDPETRPGGHVFVTLGKRETTEEDHIEETSSKESAVLTDTHHLRTKSSNPDITDQNVSSTITCVAFEPTKRFRQWVRKLRVGDIITVCGEVSNGTLKLEKFAIRSLTRTTKTAPICPGCNRTMKSAGRNQGYRCRDCGTSSSTQSEKSLDRVLSLKWYEVPPCARRHIAQPLIRGDFDAPIMPER</sequence>
<protein>
    <recommendedName>
        <fullName evidence="1">tRNA(Ile2) 2-agmatinylcytidine synthetase TiaS</fullName>
        <shortName evidence="1">tRNA(Ile2)-agm2C synthetase</shortName>
        <ecNumber evidence="1">6.3.4.22</ecNumber>
    </recommendedName>
    <alternativeName>
        <fullName evidence="1">tRNA(Ile2) agmatidine synthetase</fullName>
    </alternativeName>
</protein>
<gene>
    <name evidence="1" type="primary">tiaS</name>
    <name type="ordered locus">HQ_3056A</name>
</gene>
<organism>
    <name type="scientific">Haloquadratum walsbyi (strain DSM 16790 / HBSQ001)</name>
    <dbReference type="NCBI Taxonomy" id="362976"/>
    <lineage>
        <taxon>Archaea</taxon>
        <taxon>Methanobacteriati</taxon>
        <taxon>Methanobacteriota</taxon>
        <taxon>Stenosarchaea group</taxon>
        <taxon>Halobacteria</taxon>
        <taxon>Halobacteriales</taxon>
        <taxon>Haloferacaceae</taxon>
        <taxon>Haloquadratum</taxon>
    </lineage>
</organism>
<reference key="1">
    <citation type="journal article" date="2006" name="BMC Genomics">
        <title>The genome of the square archaeon Haloquadratum walsbyi: life at the limits of water activity.</title>
        <authorList>
            <person name="Bolhuis H."/>
            <person name="Palm P."/>
            <person name="Wende A."/>
            <person name="Falb M."/>
            <person name="Rampp M."/>
            <person name="Rodriguez-Valera F."/>
            <person name="Pfeiffer F."/>
            <person name="Oesterhelt D."/>
        </authorList>
    </citation>
    <scope>NUCLEOTIDE SEQUENCE [LARGE SCALE GENOMIC DNA]</scope>
    <source>
        <strain>DSM 16790 / HBSQ001</strain>
    </source>
</reference>
<keyword id="KW-0067">ATP-binding</keyword>
<keyword id="KW-0963">Cytoplasm</keyword>
<keyword id="KW-0436">Ligase</keyword>
<keyword id="KW-0547">Nucleotide-binding</keyword>
<keyword id="KW-1185">Reference proteome</keyword>
<keyword id="KW-0819">tRNA processing</keyword>
<accession>Q18FU7</accession>
<evidence type="ECO:0000255" key="1">
    <source>
        <dbReference type="HAMAP-Rule" id="MF_01892"/>
    </source>
</evidence>